<reference key="1">
    <citation type="submission" date="2006-08" db="EMBL/GenBank/DDBJ databases">
        <title>Complete sequence of Shewanella sp. MR-4.</title>
        <authorList>
            <consortium name="US DOE Joint Genome Institute"/>
            <person name="Copeland A."/>
            <person name="Lucas S."/>
            <person name="Lapidus A."/>
            <person name="Barry K."/>
            <person name="Detter J.C."/>
            <person name="Glavina del Rio T."/>
            <person name="Hammon N."/>
            <person name="Israni S."/>
            <person name="Dalin E."/>
            <person name="Tice H."/>
            <person name="Pitluck S."/>
            <person name="Kiss H."/>
            <person name="Brettin T."/>
            <person name="Bruce D."/>
            <person name="Han C."/>
            <person name="Tapia R."/>
            <person name="Gilna P."/>
            <person name="Schmutz J."/>
            <person name="Larimer F."/>
            <person name="Land M."/>
            <person name="Hauser L."/>
            <person name="Kyrpides N."/>
            <person name="Mikhailova N."/>
            <person name="Nealson K."/>
            <person name="Konstantinidis K."/>
            <person name="Klappenbach J."/>
            <person name="Tiedje J."/>
            <person name="Richardson P."/>
        </authorList>
    </citation>
    <scope>NUCLEOTIDE SEQUENCE [LARGE SCALE GENOMIC DNA]</scope>
    <source>
        <strain>MR-4</strain>
    </source>
</reference>
<proteinExistence type="inferred from homology"/>
<name>RL36_SHESM</name>
<gene>
    <name evidence="1" type="primary">rpmJ</name>
    <name type="ordered locus">Shewmr4_0220</name>
</gene>
<comment type="similarity">
    <text evidence="1">Belongs to the bacterial ribosomal protein bL36 family.</text>
</comment>
<organism>
    <name type="scientific">Shewanella sp. (strain MR-4)</name>
    <dbReference type="NCBI Taxonomy" id="60480"/>
    <lineage>
        <taxon>Bacteria</taxon>
        <taxon>Pseudomonadati</taxon>
        <taxon>Pseudomonadota</taxon>
        <taxon>Gammaproteobacteria</taxon>
        <taxon>Alteromonadales</taxon>
        <taxon>Shewanellaceae</taxon>
        <taxon>Shewanella</taxon>
    </lineage>
</organism>
<feature type="chain" id="PRO_0000302293" description="Large ribosomal subunit protein bL36">
    <location>
        <begin position="1"/>
        <end position="37"/>
    </location>
</feature>
<evidence type="ECO:0000255" key="1">
    <source>
        <dbReference type="HAMAP-Rule" id="MF_00251"/>
    </source>
</evidence>
<evidence type="ECO:0000305" key="2"/>
<dbReference type="EMBL" id="CP000446">
    <property type="protein sequence ID" value="ABI37301.1"/>
    <property type="molecule type" value="Genomic_DNA"/>
</dbReference>
<dbReference type="RefSeq" id="WP_006083579.1">
    <property type="nucleotide sequence ID" value="NC_008321.1"/>
</dbReference>
<dbReference type="SMR" id="Q0HNR6"/>
<dbReference type="GeneID" id="94726207"/>
<dbReference type="KEGG" id="she:Shewmr4_0220"/>
<dbReference type="HOGENOM" id="CLU_135723_6_2_6"/>
<dbReference type="GO" id="GO:0005737">
    <property type="term" value="C:cytoplasm"/>
    <property type="evidence" value="ECO:0007669"/>
    <property type="project" value="UniProtKB-ARBA"/>
</dbReference>
<dbReference type="GO" id="GO:1990904">
    <property type="term" value="C:ribonucleoprotein complex"/>
    <property type="evidence" value="ECO:0007669"/>
    <property type="project" value="UniProtKB-KW"/>
</dbReference>
<dbReference type="GO" id="GO:0005840">
    <property type="term" value="C:ribosome"/>
    <property type="evidence" value="ECO:0007669"/>
    <property type="project" value="UniProtKB-KW"/>
</dbReference>
<dbReference type="GO" id="GO:0003735">
    <property type="term" value="F:structural constituent of ribosome"/>
    <property type="evidence" value="ECO:0007669"/>
    <property type="project" value="InterPro"/>
</dbReference>
<dbReference type="GO" id="GO:0006412">
    <property type="term" value="P:translation"/>
    <property type="evidence" value="ECO:0007669"/>
    <property type="project" value="UniProtKB-UniRule"/>
</dbReference>
<dbReference type="HAMAP" id="MF_00251">
    <property type="entry name" value="Ribosomal_bL36"/>
    <property type="match status" value="1"/>
</dbReference>
<dbReference type="InterPro" id="IPR000473">
    <property type="entry name" value="Ribosomal_bL36"/>
</dbReference>
<dbReference type="InterPro" id="IPR035977">
    <property type="entry name" value="Ribosomal_bL36_sp"/>
</dbReference>
<dbReference type="NCBIfam" id="TIGR01022">
    <property type="entry name" value="rpmJ_bact"/>
    <property type="match status" value="1"/>
</dbReference>
<dbReference type="PANTHER" id="PTHR42888">
    <property type="entry name" value="50S RIBOSOMAL PROTEIN L36, CHLOROPLASTIC"/>
    <property type="match status" value="1"/>
</dbReference>
<dbReference type="PANTHER" id="PTHR42888:SF1">
    <property type="entry name" value="LARGE RIBOSOMAL SUBUNIT PROTEIN BL36C"/>
    <property type="match status" value="1"/>
</dbReference>
<dbReference type="Pfam" id="PF00444">
    <property type="entry name" value="Ribosomal_L36"/>
    <property type="match status" value="1"/>
</dbReference>
<dbReference type="SUPFAM" id="SSF57840">
    <property type="entry name" value="Ribosomal protein L36"/>
    <property type="match status" value="1"/>
</dbReference>
<dbReference type="PROSITE" id="PS00828">
    <property type="entry name" value="RIBOSOMAL_L36"/>
    <property type="match status" value="1"/>
</dbReference>
<sequence length="37" mass="4263">MKVRASVKKICRNCKIVKRSGVVRVICVEPKHKQRQG</sequence>
<keyword id="KW-0687">Ribonucleoprotein</keyword>
<keyword id="KW-0689">Ribosomal protein</keyword>
<protein>
    <recommendedName>
        <fullName evidence="1">Large ribosomal subunit protein bL36</fullName>
    </recommendedName>
    <alternativeName>
        <fullName evidence="2">50S ribosomal protein L36</fullName>
    </alternativeName>
</protein>
<accession>Q0HNR6</accession>